<reference key="1">
    <citation type="journal article" date="1996" name="Oncogene">
        <title>Identification of a new family of Pbx-related homeobox genes.</title>
        <authorList>
            <person name="Nakamura T."/>
            <person name="Jenkins N.A."/>
            <person name="Copeland N.G."/>
        </authorList>
    </citation>
    <scope>NUCLEOTIDE SEQUENCE [MRNA] (ISOFORM MEIS2A)</scope>
    <source>
        <strain>Swiss Webster</strain>
    </source>
</reference>
<reference key="2">
    <citation type="journal article" date="1997" name="Dev. Dyn.">
        <title>Meis2, a novel mouse Pbx-related homeobox gene induced by retinoic acid during differentiation of P19 embryonal carcinoma cells.</title>
        <authorList>
            <person name="Oulad-Abdelghani M."/>
            <person name="Chazaud C."/>
            <person name="Bouillet P."/>
            <person name="Sapin V."/>
            <person name="Chambon P."/>
            <person name="Dolle P."/>
        </authorList>
    </citation>
    <scope>NUCLEOTIDE SEQUENCE [MRNA] (ISOFORMS MEIS2A; MEIS2B; MEIS2C AND MEIS2D)</scope>
</reference>
<reference key="3">
    <citation type="journal article" date="1997" name="Genome Res.">
        <title>Identification of a conserved family of Meis1-related homeobox genes.</title>
        <authorList>
            <person name="Steelman S."/>
            <person name="Moskow J.J."/>
            <person name="Muzynski K."/>
            <person name="North C."/>
            <person name="Druck T."/>
            <person name="Montgomery J.C."/>
            <person name="Huebner K."/>
            <person name="Daar I.O."/>
            <person name="Buchberg A.M."/>
        </authorList>
    </citation>
    <scope>NUCLEOTIDE SEQUENCE [MRNA] (ISOFORMS MEIS2B AND MEIS2D)</scope>
</reference>
<reference key="4">
    <citation type="journal article" date="1998" name="Mol. Cell. Biol.">
        <title>An endocrine-exocrine switch in the activity of the pancreatic homeodomain protein PDX1 through formation of a trimeric complex with PBX1b and MRG1 (MEIS2).</title>
        <authorList>
            <person name="Swift G.H."/>
            <person name="Liu Y."/>
            <person name="Rose S.D."/>
            <person name="Bischof L.J."/>
            <person name="Steelman S."/>
            <person name="Buchberg A.M."/>
            <person name="Wright C.V."/>
            <person name="MacDonald R.J."/>
        </authorList>
    </citation>
    <scope>SUBCELLULAR LOCATION</scope>
    <scope>IDENTIFICATION IN A COMPLEX WITH PDX1 AND PBX1</scope>
</reference>
<reference key="5">
    <citation type="journal article" date="2000" name="Mech. Dev.">
        <title>Expression of Meis and Pbx genes and their protein products in the developing telencephalon: implications for regional differentiation.</title>
        <authorList>
            <person name="Toresson H."/>
            <person name="Parmar M."/>
            <person name="Campbell K."/>
        </authorList>
    </citation>
    <scope>DEVELOPMENTAL STAGE</scope>
</reference>
<reference key="6">
    <citation type="journal article" date="2001" name="Exp. Hematol.">
        <title>Inhibition of myeloid differentiation by Hoxa9, Hoxb8, and Meis homeobox genes.</title>
        <authorList>
            <person name="Fujino T."/>
            <person name="Yamazaki Y."/>
            <person name="Largaespada D.A."/>
            <person name="Jenkins N.A."/>
            <person name="Copeland N.G."/>
            <person name="Hirokawa K."/>
            <person name="Nakamura T."/>
        </authorList>
    </citation>
    <scope>FUNCTION</scope>
    <scope>SUBUNIT</scope>
</reference>
<reference key="7">
    <citation type="journal article" date="2001" name="J. Biol. Chem.">
        <title>DNA binding and transcriptional activation by a PDX1.PBX1b.MEIS2b trimer and cooperation with a pancreas-specific basic helix-loop-helix complex.</title>
        <authorList>
            <person name="Liu Y."/>
            <person name="MacDonald R.J."/>
            <person name="Swift G.H."/>
        </authorList>
    </citation>
    <scope>FUNCTION</scope>
    <scope>INTERACTION WITH PBX1</scope>
    <scope>IDENTIFICATION IN A COMPLEX WITH PDX1 AND PBX1</scope>
</reference>
<reference key="8">
    <citation type="journal article" date="2005" name="Dev. Biol.">
        <title>Range of HOX/TALE superclass associations and protein domain requirements for HOXA13:MEIS interaction.</title>
        <authorList>
            <person name="Williams T.M."/>
            <person name="Williams M.E."/>
            <person name="Innis J.W."/>
        </authorList>
    </citation>
    <scope>INTERACTION WITH HOXA13</scope>
</reference>
<reference key="9">
    <citation type="journal article" date="2007" name="Mol. Cell. Biol.">
        <title>Regulation of EphA8 gene expression by TALE homeobox transcription factors during development of the mesencephalon.</title>
        <authorList>
            <person name="Shim S."/>
            <person name="Kim Y."/>
            <person name="Shin J."/>
            <person name="Kim J."/>
            <person name="Park S."/>
        </authorList>
    </citation>
    <scope>FUNCTION</scope>
    <scope>DNA-BINDING</scope>
</reference>
<reference key="10">
    <citation type="journal article" date="2010" name="Proc. Natl. Acad. Sci. U.S.A.">
        <title>Three-amino-acid-loop-extension homeodomain factor Meis3 regulates cell survival via PDK1.</title>
        <authorList>
            <person name="Liu J."/>
            <person name="Wang Y."/>
            <person name="Birnbaum M.J."/>
            <person name="Stoffers D.A."/>
        </authorList>
    </citation>
    <scope>SUBCELLULAR LOCATION</scope>
    <scope>TISSUE SPECIFICITY</scope>
</reference>
<keyword id="KW-0010">Activator</keyword>
<keyword id="KW-0025">Alternative splicing</keyword>
<keyword id="KW-0963">Cytoplasm</keyword>
<keyword id="KW-0217">Developmental protein</keyword>
<keyword id="KW-0238">DNA-binding</keyword>
<keyword id="KW-0371">Homeobox</keyword>
<keyword id="KW-0539">Nucleus</keyword>
<keyword id="KW-1185">Reference proteome</keyword>
<keyword id="KW-0804">Transcription</keyword>
<keyword id="KW-0805">Transcription regulation</keyword>
<organism>
    <name type="scientific">Mus musculus</name>
    <name type="common">Mouse</name>
    <dbReference type="NCBI Taxonomy" id="10090"/>
    <lineage>
        <taxon>Eukaryota</taxon>
        <taxon>Metazoa</taxon>
        <taxon>Chordata</taxon>
        <taxon>Craniata</taxon>
        <taxon>Vertebrata</taxon>
        <taxon>Euteleostomi</taxon>
        <taxon>Mammalia</taxon>
        <taxon>Eutheria</taxon>
        <taxon>Euarchontoglires</taxon>
        <taxon>Glires</taxon>
        <taxon>Rodentia</taxon>
        <taxon>Myomorpha</taxon>
        <taxon>Muroidea</taxon>
        <taxon>Muridae</taxon>
        <taxon>Murinae</taxon>
        <taxon>Mus</taxon>
        <taxon>Mus</taxon>
    </lineage>
</organism>
<gene>
    <name type="primary">Meis2</name>
    <name type="synonym">Mrg1</name>
    <name type="synonym">Stra10</name>
</gene>
<comment type="function">
    <text evidence="7 8 10">Involved in transcriptional regulation. Binds to HOX or PBX proteins to form dimers, or to a DNA-bound dimer of PBX and HOX proteins and thought to have a role in stabilization of the homeoprotein-DNA complex. Isoform Meis2B is required for the activity of a PDX1:PBX1b:MEIS2b complex in pancreatic acinar cells involved in the transcriptional activation of the ELA1 enhancer; the complex binds to the enhancer B element and cooperates with the transcription factor 1 complex (PTF1) bound to the enhancer A element; MEIS2 is not involved in complex DNA-binding. Probably in complex with PBX1, is involved in transcriptional regulation by KLF4. Isoforms Meis2B and Meis2D can bind to a EPHA8 promoter sequence containing the DNA motif 5'-CGGTCA-3'; in cooperation with a PBX protein (such as PBX2) is proposed to be involved in the transcriptional activation of EPHA8 in the developing midbrain. May be involved in regulation of myeloid differentiation. Can bind to the DNA sequence 5'-TGACAG-3'in the activator ACT sequence of the D(1A) dopamine receptor (DRD1) promoter and activate DRD1 transcription.</text>
</comment>
<comment type="subunit">
    <text evidence="2 7 8 9 12">Monomer and homodimer. Heterodimer with HOXB13 (By similarity). Isoform Meis2A interacts with TLX1. Isoform Meis2B interacts with HOXA13 and PBX1 isoform PBX1b. Isoform Meis2D interacts with SP1, SP3 and KLF4. Isoform Meis2D interacts with PBX1 isoform PBX1a; the interaction partially relieves MEIS2 autoinhibition. Isoform Meis2B is part of a PDX1:PBX1b:MEIS2b complex; Meis2B is recruited by PBX1b and can be replaced by isoform Meis2D in a small fraction of complexes. Can form trimeric complexes including HOXB8 and PBX2 or PBX3.</text>
</comment>
<comment type="subcellular location">
    <subcellularLocation>
        <location evidence="4 12">Nucleus</location>
    </subcellularLocation>
    <subcellularLocation>
        <location evidence="11">Cytoplasm</location>
        <location evidence="11">Perinuclear region</location>
    </subcellularLocation>
</comment>
<comment type="alternative products">
    <event type="alternative splicing"/>
    <isoform>
        <id>P97367-1</id>
        <name>Meis2C</name>
        <sequence type="displayed"/>
    </isoform>
    <isoform>
        <id>P97367-2</id>
        <name>Meis2A</name>
        <sequence type="described" ref="VSP_002248 VSP_002249"/>
    </isoform>
    <isoform>
        <id>P97367-3</id>
        <name>Meis2B</name>
        <name>Mrg1A</name>
        <sequence type="described" ref="VSP_002247 VSP_002248 VSP_002249"/>
    </isoform>
    <isoform>
        <id>P97367-4</id>
        <name>Meis2D</name>
        <name>Mrg1B</name>
        <sequence type="described" ref="VSP_002247"/>
    </isoform>
    <text>Additional isoforms seem to exist.</text>
</comment>
<comment type="tissue specificity">
    <text evidence="11">Displays spatially restricted expression patterns in the developing nervous system, limbs, face, and in various viscera. In adult, it is mainly expressed in the brain and female genital tract, with a different distribution of the alternative splice forms in these organs. Lower expression in lung and only basal level in heart, liver, kidney, spleen, and testis. Expressed in pancreatic islets (beta-cells only) (PubMed:21059917).</text>
</comment>
<comment type="developmental stage">
    <text evidence="6">Expressed at high levels in all stages of embryonic development analyzed (7 days to 17 days). First detected around 10.5 dpc in the developing ventrolateral telencephalon. Is found at moderate levels throughout the ventricle zone (VZ) of the entire telencephalon with the exception of the ventro- and dorso-medial regions. The highest expression is detected in the subventricular zone (SVZ) of the lateral ganglionic eminence (LGE) and developing striatum. By 16.5 dpc, also found in the cortical plate. Also expressed at high levels in the caudal ganglionic eminence (CGE) and amygdala. Expression in the telencephalon remains unchanged at birth and into adulthood.</text>
</comment>
<comment type="induction">
    <text>By retinoic acid.</text>
</comment>
<comment type="similarity">
    <text evidence="16">Belongs to the TALE/MEIS homeobox family.</text>
</comment>
<feature type="chain" id="PRO_0000049109" description="Homeobox protein Meis2">
    <location>
        <begin position="1"/>
        <end position="477"/>
    </location>
</feature>
<feature type="domain" description="MEIS N-terminal" evidence="3">
    <location>
        <begin position="110"/>
        <end position="193"/>
    </location>
</feature>
<feature type="DNA-binding region" description="Homeobox; TALE-type" evidence="4">
    <location>
        <begin position="276"/>
        <end position="338"/>
    </location>
</feature>
<feature type="region of interest" description="Required for interaction with PBX1" evidence="7">
    <location>
        <begin position="71"/>
        <end position="191"/>
    </location>
</feature>
<feature type="region of interest" description="Disordered" evidence="5">
    <location>
        <begin position="193"/>
        <end position="283"/>
    </location>
</feature>
<feature type="region of interest" description="Interaction with DNA" evidence="2">
    <location>
        <begin position="299"/>
        <end position="333"/>
    </location>
</feature>
<feature type="region of interest" description="Transcriptional activation domain" evidence="1">
    <location>
        <begin position="340"/>
        <end position="477"/>
    </location>
</feature>
<feature type="compositionally biased region" description="Basic and acidic residues" evidence="5">
    <location>
        <begin position="193"/>
        <end position="203"/>
    </location>
</feature>
<feature type="compositionally biased region" description="Polar residues" evidence="5">
    <location>
        <begin position="204"/>
        <end position="217"/>
    </location>
</feature>
<feature type="compositionally biased region" description="Polar residues" evidence="5">
    <location>
        <begin position="239"/>
        <end position="251"/>
    </location>
</feature>
<feature type="splice variant" id="VSP_002247" description="In isoform Meis2B and isoform Meis2D." evidence="14 15">
    <location>
        <begin position="346"/>
        <end position="352"/>
    </location>
</feature>
<feature type="splice variant" id="VSP_002248" description="In isoform Meis2A and isoform Meis2B." evidence="13 14 15">
    <original>LQSMPGDYVSQGGPMGMG</original>
    <variation>PMSGMGMNMGMDGQWHYM</variation>
    <location>
        <begin position="384"/>
        <end position="401"/>
    </location>
</feature>
<feature type="splice variant" id="VSP_002249" description="In isoform Meis2A and isoform Meis2B." evidence="13 14 15">
    <location>
        <begin position="402"/>
        <end position="477"/>
    </location>
</feature>
<feature type="sequence conflict" description="In Ref. 1; AAC52948." evidence="16" ref="1">
    <original>A</original>
    <variation>E</variation>
    <location>
        <position position="2"/>
    </location>
</feature>
<feature type="sequence conflict" description="In Ref. 1; AAC52948." evidence="16" ref="1">
    <original>T</original>
    <variation>A</variation>
    <location>
        <position position="316"/>
    </location>
</feature>
<proteinExistence type="evidence at protein level"/>
<sequence>MAQRYDELPHYGGMDGVGVPASMYGDPHAPRPIPPVHHLNHGPPLHATQHYGAHAPHPNVMPASMGSAVNDALKRDKDAIYGHPLFPLLALVFEKCELATCTPREPGVAGGDVCSSDSFNEDIAVFAKQVRAEKPLFSSNPELDNLMIQAIQVLRFHLLELEKVHELCDNFCHRYISCLKGKMPIDLVIDERDGSSKSDHEELSGSSTNLADHNPSSWRDHDDATSTHSAGTPGPSSGGHASQSGDNSSEQGDGLDNSVASPGTGDDDDPDKDKKRQKKRGIFPKVATNIMRAWLFQHLTHPYPSEEQKKQLAQDTGLTILQVNNWFINARRRIVQPMIDQSNRAGFLLDPSVSQGAAYSPEGQPMGSFVLDGQQHMGIRPAGLQSMPGDYVSQGGPMGMGMAQPSYTPPQMTPHPTQLRHGPPMHSYLPSHPHHPAMVMHGGPPTHPGMTMSAQSPTMLNSVDPNVGGQVMDIHAQ</sequence>
<name>MEIS2_MOUSE</name>
<accession>P97367</accession>
<accession>O35676</accession>
<accession>O35677</accession>
<accession>P97403</accession>
<accession>P97404</accession>
<protein>
    <recommendedName>
        <fullName>Homeobox protein Meis2</fullName>
    </recommendedName>
    <alternativeName>
        <fullName>Meis1-related protein 1</fullName>
    </alternativeName>
</protein>
<dbReference type="EMBL" id="U57343">
    <property type="protein sequence ID" value="AAC52948.1"/>
    <property type="molecule type" value="mRNA"/>
</dbReference>
<dbReference type="EMBL" id="AJ000504">
    <property type="protein sequence ID" value="CAA04138.1"/>
    <property type="molecule type" value="mRNA"/>
</dbReference>
<dbReference type="EMBL" id="AJ000505">
    <property type="protein sequence ID" value="CAA04139.1"/>
    <property type="molecule type" value="mRNA"/>
</dbReference>
<dbReference type="EMBL" id="AJ000506">
    <property type="protein sequence ID" value="CAA04140.1"/>
    <property type="molecule type" value="mRNA"/>
</dbReference>
<dbReference type="EMBL" id="AJ000507">
    <property type="protein sequence ID" value="CAA04141.1"/>
    <property type="molecule type" value="mRNA"/>
</dbReference>
<dbReference type="EMBL" id="U68383">
    <property type="protein sequence ID" value="AAB19193.1"/>
    <property type="molecule type" value="mRNA"/>
</dbReference>
<dbReference type="EMBL" id="U68384">
    <property type="protein sequence ID" value="AAB19194.1"/>
    <property type="molecule type" value="mRNA"/>
</dbReference>
<dbReference type="CCDS" id="CCDS16568.1">
    <molecule id="P97367-4"/>
</dbReference>
<dbReference type="CCDS" id="CCDS50666.1">
    <molecule id="P97367-3"/>
</dbReference>
<dbReference type="CCDS" id="CCDS50667.1">
    <molecule id="P97367-1"/>
</dbReference>
<dbReference type="CCDS" id="CCDS50668.1">
    <molecule id="P97367-2"/>
</dbReference>
<dbReference type="RefSeq" id="NP_001129544.1">
    <molecule id="P97367-3"/>
    <property type="nucleotide sequence ID" value="NM_001136072.2"/>
</dbReference>
<dbReference type="RefSeq" id="NP_001153039.1">
    <molecule id="P97367-2"/>
    <property type="nucleotide sequence ID" value="NM_001159567.1"/>
</dbReference>
<dbReference type="RefSeq" id="NP_001153040.1">
    <molecule id="P97367-1"/>
    <property type="nucleotide sequence ID" value="NM_001159568.1"/>
</dbReference>
<dbReference type="RefSeq" id="NP_034955.1">
    <molecule id="P97367-4"/>
    <property type="nucleotide sequence ID" value="NM_010825.3"/>
</dbReference>
<dbReference type="SMR" id="P97367"/>
<dbReference type="BioGRID" id="201487">
    <property type="interactions" value="9"/>
</dbReference>
<dbReference type="CORUM" id="P97367"/>
<dbReference type="FunCoup" id="P97367">
    <property type="interactions" value="2710"/>
</dbReference>
<dbReference type="IntAct" id="P97367">
    <property type="interactions" value="7"/>
</dbReference>
<dbReference type="STRING" id="10090.ENSMUSP00000028639"/>
<dbReference type="iPTMnet" id="P97367"/>
<dbReference type="PhosphoSitePlus" id="P97367"/>
<dbReference type="PaxDb" id="10090-ENSMUSP00000028639"/>
<dbReference type="ProteomicsDB" id="295879">
    <molecule id="P97367-1"/>
</dbReference>
<dbReference type="ProteomicsDB" id="295880">
    <molecule id="P97367-2"/>
</dbReference>
<dbReference type="ProteomicsDB" id="295881">
    <molecule id="P97367-3"/>
</dbReference>
<dbReference type="ProteomicsDB" id="295882">
    <molecule id="P97367-4"/>
</dbReference>
<dbReference type="Pumba" id="P97367"/>
<dbReference type="Antibodypedia" id="918">
    <property type="antibodies" value="312 antibodies from 35 providers"/>
</dbReference>
<dbReference type="DNASU" id="17536"/>
<dbReference type="Ensembl" id="ENSMUST00000028639.13">
    <molecule id="P97367-1"/>
    <property type="protein sequence ID" value="ENSMUSP00000028639.7"/>
    <property type="gene ID" value="ENSMUSG00000027210.21"/>
</dbReference>
<dbReference type="Ensembl" id="ENSMUST00000102538.11">
    <molecule id="P97367-4"/>
    <property type="protein sequence ID" value="ENSMUSP00000099597.4"/>
    <property type="gene ID" value="ENSMUSG00000027210.21"/>
</dbReference>
<dbReference type="Ensembl" id="ENSMUST00000110907.8">
    <molecule id="P97367-2"/>
    <property type="protein sequence ID" value="ENSMUSP00000106532.2"/>
    <property type="gene ID" value="ENSMUSG00000027210.21"/>
</dbReference>
<dbReference type="Ensembl" id="ENSMUST00000110908.9">
    <molecule id="P97367-3"/>
    <property type="protein sequence ID" value="ENSMUSP00000106533.3"/>
    <property type="gene ID" value="ENSMUSG00000027210.21"/>
</dbReference>
<dbReference type="GeneID" id="17536"/>
<dbReference type="KEGG" id="mmu:17536"/>
<dbReference type="UCSC" id="uc008lqw.2">
    <molecule id="P97367-2"/>
    <property type="organism name" value="mouse"/>
</dbReference>
<dbReference type="UCSC" id="uc008lqy.2">
    <molecule id="P97367-1"/>
    <property type="organism name" value="mouse"/>
</dbReference>
<dbReference type="AGR" id="MGI:108564"/>
<dbReference type="CTD" id="4212"/>
<dbReference type="MGI" id="MGI:108564">
    <property type="gene designation" value="Meis2"/>
</dbReference>
<dbReference type="VEuPathDB" id="HostDB:ENSMUSG00000027210"/>
<dbReference type="eggNOG" id="KOG0773">
    <property type="taxonomic scope" value="Eukaryota"/>
</dbReference>
<dbReference type="GeneTree" id="ENSGT00940000155643"/>
<dbReference type="HOGENOM" id="CLU_023139_1_1_1"/>
<dbReference type="InParanoid" id="P97367"/>
<dbReference type="OMA" id="TYANPHQ"/>
<dbReference type="OrthoDB" id="10056939at2759"/>
<dbReference type="PhylomeDB" id="P97367"/>
<dbReference type="TreeFam" id="TF318093"/>
<dbReference type="BioGRID-ORCS" id="17536">
    <property type="hits" value="2 hits in 78 CRISPR screens"/>
</dbReference>
<dbReference type="ChiTaRS" id="Meis2">
    <property type="organism name" value="mouse"/>
</dbReference>
<dbReference type="PRO" id="PR:P97367"/>
<dbReference type="Proteomes" id="UP000000589">
    <property type="component" value="Chromosome 2"/>
</dbReference>
<dbReference type="RNAct" id="P97367">
    <property type="molecule type" value="protein"/>
</dbReference>
<dbReference type="Bgee" id="ENSMUSG00000027210">
    <property type="expression patterns" value="Expressed in rostral migratory stream and 282 other cell types or tissues"/>
</dbReference>
<dbReference type="ExpressionAtlas" id="P97367">
    <property type="expression patterns" value="baseline and differential"/>
</dbReference>
<dbReference type="GO" id="GO:0005634">
    <property type="term" value="C:nucleus"/>
    <property type="evidence" value="ECO:0000314"/>
    <property type="project" value="MGI"/>
</dbReference>
<dbReference type="GO" id="GO:0048471">
    <property type="term" value="C:perinuclear region of cytoplasm"/>
    <property type="evidence" value="ECO:0007669"/>
    <property type="project" value="UniProtKB-SubCell"/>
</dbReference>
<dbReference type="GO" id="GO:0003677">
    <property type="term" value="F:DNA binding"/>
    <property type="evidence" value="ECO:0000314"/>
    <property type="project" value="MGI"/>
</dbReference>
<dbReference type="GO" id="GO:0001228">
    <property type="term" value="F:DNA-binding transcription activator activity, RNA polymerase II-specific"/>
    <property type="evidence" value="ECO:0000314"/>
    <property type="project" value="GO_Central"/>
</dbReference>
<dbReference type="GO" id="GO:0000978">
    <property type="term" value="F:RNA polymerase II cis-regulatory region sequence-specific DNA binding"/>
    <property type="evidence" value="ECO:0007669"/>
    <property type="project" value="Ensembl"/>
</dbReference>
<dbReference type="GO" id="GO:0043565">
    <property type="term" value="F:sequence-specific DNA binding"/>
    <property type="evidence" value="ECO:0000314"/>
    <property type="project" value="MGI"/>
</dbReference>
<dbReference type="GO" id="GO:0008134">
    <property type="term" value="F:transcription factor binding"/>
    <property type="evidence" value="ECO:0000314"/>
    <property type="project" value="UniProtKB"/>
</dbReference>
<dbReference type="GO" id="GO:0001654">
    <property type="term" value="P:eye development"/>
    <property type="evidence" value="ECO:0000316"/>
    <property type="project" value="MGI"/>
</dbReference>
<dbReference type="GO" id="GO:0045638">
    <property type="term" value="P:negative regulation of myeloid cell differentiation"/>
    <property type="evidence" value="ECO:0000314"/>
    <property type="project" value="UniProtKB"/>
</dbReference>
<dbReference type="GO" id="GO:0031016">
    <property type="term" value="P:pancreas development"/>
    <property type="evidence" value="ECO:0007669"/>
    <property type="project" value="Ensembl"/>
</dbReference>
<dbReference type="GO" id="GO:0110024">
    <property type="term" value="P:positive regulation of cardiac muscle myoblast proliferation"/>
    <property type="evidence" value="ECO:0007669"/>
    <property type="project" value="Ensembl"/>
</dbReference>
<dbReference type="GO" id="GO:0045931">
    <property type="term" value="P:positive regulation of mitotic cell cycle"/>
    <property type="evidence" value="ECO:0007669"/>
    <property type="project" value="Ensembl"/>
</dbReference>
<dbReference type="GO" id="GO:0070848">
    <property type="term" value="P:response to growth factor"/>
    <property type="evidence" value="ECO:0007669"/>
    <property type="project" value="Ensembl"/>
</dbReference>
<dbReference type="GO" id="GO:0009612">
    <property type="term" value="P:response to mechanical stimulus"/>
    <property type="evidence" value="ECO:0007669"/>
    <property type="project" value="Ensembl"/>
</dbReference>
<dbReference type="GO" id="GO:0008542">
    <property type="term" value="P:visual learning"/>
    <property type="evidence" value="ECO:0000315"/>
    <property type="project" value="MGI"/>
</dbReference>
<dbReference type="CDD" id="cd00086">
    <property type="entry name" value="homeodomain"/>
    <property type="match status" value="1"/>
</dbReference>
<dbReference type="FunFam" id="1.10.10.60:FF:000004">
    <property type="entry name" value="Meis2 homeobox isoform 2c"/>
    <property type="match status" value="1"/>
</dbReference>
<dbReference type="Gene3D" id="1.10.10.60">
    <property type="entry name" value="Homeodomain-like"/>
    <property type="match status" value="1"/>
</dbReference>
<dbReference type="InterPro" id="IPR001356">
    <property type="entry name" value="HD"/>
</dbReference>
<dbReference type="InterPro" id="IPR009057">
    <property type="entry name" value="Homeodomain-like_sf"/>
</dbReference>
<dbReference type="InterPro" id="IPR008422">
    <property type="entry name" value="KN_HD"/>
</dbReference>
<dbReference type="InterPro" id="IPR032453">
    <property type="entry name" value="PKNOX/Meis_N"/>
</dbReference>
<dbReference type="InterPro" id="IPR050224">
    <property type="entry name" value="TALE_homeobox"/>
</dbReference>
<dbReference type="PANTHER" id="PTHR11850">
    <property type="entry name" value="HOMEOBOX PROTEIN TRANSCRIPTION FACTORS"/>
    <property type="match status" value="1"/>
</dbReference>
<dbReference type="Pfam" id="PF05920">
    <property type="entry name" value="Homeobox_KN"/>
    <property type="match status" value="1"/>
</dbReference>
<dbReference type="Pfam" id="PF16493">
    <property type="entry name" value="Meis_PKNOX_N"/>
    <property type="match status" value="1"/>
</dbReference>
<dbReference type="SMART" id="SM00389">
    <property type="entry name" value="HOX"/>
    <property type="match status" value="1"/>
</dbReference>
<dbReference type="SUPFAM" id="SSF46689">
    <property type="entry name" value="Homeodomain-like"/>
    <property type="match status" value="1"/>
</dbReference>
<dbReference type="PROSITE" id="PS50071">
    <property type="entry name" value="HOMEOBOX_2"/>
    <property type="match status" value="1"/>
</dbReference>
<evidence type="ECO:0000250" key="1"/>
<evidence type="ECO:0000250" key="2">
    <source>
        <dbReference type="UniProtKB" id="O14770"/>
    </source>
</evidence>
<evidence type="ECO:0000255" key="3"/>
<evidence type="ECO:0000255" key="4">
    <source>
        <dbReference type="PROSITE-ProRule" id="PRU00108"/>
    </source>
</evidence>
<evidence type="ECO:0000256" key="5">
    <source>
        <dbReference type="SAM" id="MobiDB-lite"/>
    </source>
</evidence>
<evidence type="ECO:0000269" key="6">
    <source>
    </source>
</evidence>
<evidence type="ECO:0000269" key="7">
    <source>
    </source>
</evidence>
<evidence type="ECO:0000269" key="8">
    <source>
    </source>
</evidence>
<evidence type="ECO:0000269" key="9">
    <source>
    </source>
</evidence>
<evidence type="ECO:0000269" key="10">
    <source>
    </source>
</evidence>
<evidence type="ECO:0000269" key="11">
    <source>
    </source>
</evidence>
<evidence type="ECO:0000269" key="12">
    <source>
    </source>
</evidence>
<evidence type="ECO:0000303" key="13">
    <source>
    </source>
</evidence>
<evidence type="ECO:0000303" key="14">
    <source>
    </source>
</evidence>
<evidence type="ECO:0000303" key="15">
    <source>
    </source>
</evidence>
<evidence type="ECO:0000305" key="16"/>